<name>CDC26_HUMAN</name>
<protein>
    <recommendedName>
        <fullName>Anaphase-promoting complex subunit CDC26</fullName>
    </recommendedName>
    <alternativeName>
        <fullName>Anaphase-promoting complex subunit 12</fullName>
        <shortName>APC12</shortName>
    </alternativeName>
    <alternativeName>
        <fullName>Cell division cycle protein 26 homolog</fullName>
    </alternativeName>
</protein>
<reference key="1">
    <citation type="journal article" date="2000" name="Proc. Natl. Acad. Sci. U.S.A.">
        <title>The RING-H2 finger protein APC11 and the E2 enzyme UBC4 are sufficient to ubiquitinate substrates of the anaphase-promoting complex.</title>
        <authorList>
            <person name="Gmachl M."/>
            <person name="Gieffers C."/>
            <person name="Podtelejnikov A.V."/>
            <person name="Mann M."/>
            <person name="Peters J.-M."/>
        </authorList>
    </citation>
    <scope>NUCLEOTIDE SEQUENCE [MRNA]</scope>
    <scope>IDENTIFICATION IN THE APC/C COMPLEX</scope>
</reference>
<reference key="2">
    <citation type="journal article" date="2004" name="Nature">
        <title>DNA sequence and analysis of human chromosome 9.</title>
        <authorList>
            <person name="Humphray S.J."/>
            <person name="Oliver K."/>
            <person name="Hunt A.R."/>
            <person name="Plumb R.W."/>
            <person name="Loveland J.E."/>
            <person name="Howe K.L."/>
            <person name="Andrews T.D."/>
            <person name="Searle S."/>
            <person name="Hunt S.E."/>
            <person name="Scott C.E."/>
            <person name="Jones M.C."/>
            <person name="Ainscough R."/>
            <person name="Almeida J.P."/>
            <person name="Ambrose K.D."/>
            <person name="Ashwell R.I.S."/>
            <person name="Babbage A.K."/>
            <person name="Babbage S."/>
            <person name="Bagguley C.L."/>
            <person name="Bailey J."/>
            <person name="Banerjee R."/>
            <person name="Barker D.J."/>
            <person name="Barlow K.F."/>
            <person name="Bates K."/>
            <person name="Beasley H."/>
            <person name="Beasley O."/>
            <person name="Bird C.P."/>
            <person name="Bray-Allen S."/>
            <person name="Brown A.J."/>
            <person name="Brown J.Y."/>
            <person name="Burford D."/>
            <person name="Burrill W."/>
            <person name="Burton J."/>
            <person name="Carder C."/>
            <person name="Carter N.P."/>
            <person name="Chapman J.C."/>
            <person name="Chen Y."/>
            <person name="Clarke G."/>
            <person name="Clark S.Y."/>
            <person name="Clee C.M."/>
            <person name="Clegg S."/>
            <person name="Collier R.E."/>
            <person name="Corby N."/>
            <person name="Crosier M."/>
            <person name="Cummings A.T."/>
            <person name="Davies J."/>
            <person name="Dhami P."/>
            <person name="Dunn M."/>
            <person name="Dutta I."/>
            <person name="Dyer L.W."/>
            <person name="Earthrowl M.E."/>
            <person name="Faulkner L."/>
            <person name="Fleming C.J."/>
            <person name="Frankish A."/>
            <person name="Frankland J.A."/>
            <person name="French L."/>
            <person name="Fricker D.G."/>
            <person name="Garner P."/>
            <person name="Garnett J."/>
            <person name="Ghori J."/>
            <person name="Gilbert J.G.R."/>
            <person name="Glison C."/>
            <person name="Grafham D.V."/>
            <person name="Gribble S."/>
            <person name="Griffiths C."/>
            <person name="Griffiths-Jones S."/>
            <person name="Grocock R."/>
            <person name="Guy J."/>
            <person name="Hall R.E."/>
            <person name="Hammond S."/>
            <person name="Harley J.L."/>
            <person name="Harrison E.S.I."/>
            <person name="Hart E.A."/>
            <person name="Heath P.D."/>
            <person name="Henderson C.D."/>
            <person name="Hopkins B.L."/>
            <person name="Howard P.J."/>
            <person name="Howden P.J."/>
            <person name="Huckle E."/>
            <person name="Johnson C."/>
            <person name="Johnson D."/>
            <person name="Joy A.A."/>
            <person name="Kay M."/>
            <person name="Keenan S."/>
            <person name="Kershaw J.K."/>
            <person name="Kimberley A.M."/>
            <person name="King A."/>
            <person name="Knights A."/>
            <person name="Laird G.K."/>
            <person name="Langford C."/>
            <person name="Lawlor S."/>
            <person name="Leongamornlert D.A."/>
            <person name="Leversha M."/>
            <person name="Lloyd C."/>
            <person name="Lloyd D.M."/>
            <person name="Lovell J."/>
            <person name="Martin S."/>
            <person name="Mashreghi-Mohammadi M."/>
            <person name="Matthews L."/>
            <person name="McLaren S."/>
            <person name="McLay K.E."/>
            <person name="McMurray A."/>
            <person name="Milne S."/>
            <person name="Nickerson T."/>
            <person name="Nisbett J."/>
            <person name="Nordsiek G."/>
            <person name="Pearce A.V."/>
            <person name="Peck A.I."/>
            <person name="Porter K.M."/>
            <person name="Pandian R."/>
            <person name="Pelan S."/>
            <person name="Phillimore B."/>
            <person name="Povey S."/>
            <person name="Ramsey Y."/>
            <person name="Rand V."/>
            <person name="Scharfe M."/>
            <person name="Sehra H.K."/>
            <person name="Shownkeen R."/>
            <person name="Sims S.K."/>
            <person name="Skuce C.D."/>
            <person name="Smith M."/>
            <person name="Steward C.A."/>
            <person name="Swarbreck D."/>
            <person name="Sycamore N."/>
            <person name="Tester J."/>
            <person name="Thorpe A."/>
            <person name="Tracey A."/>
            <person name="Tromans A."/>
            <person name="Thomas D.W."/>
            <person name="Wall M."/>
            <person name="Wallis J.M."/>
            <person name="West A.P."/>
            <person name="Whitehead S.L."/>
            <person name="Willey D.L."/>
            <person name="Williams S.A."/>
            <person name="Wilming L."/>
            <person name="Wray P.W."/>
            <person name="Young L."/>
            <person name="Ashurst J.L."/>
            <person name="Coulson A."/>
            <person name="Blocker H."/>
            <person name="Durbin R.M."/>
            <person name="Sulston J.E."/>
            <person name="Hubbard T."/>
            <person name="Jackson M.J."/>
            <person name="Bentley D.R."/>
            <person name="Beck S."/>
            <person name="Rogers J."/>
            <person name="Dunham I."/>
        </authorList>
    </citation>
    <scope>NUCLEOTIDE SEQUENCE [LARGE SCALE GENOMIC DNA]</scope>
</reference>
<reference key="3">
    <citation type="journal article" date="2004" name="Genome Res.">
        <title>The status, quality, and expansion of the NIH full-length cDNA project: the Mammalian Gene Collection (MGC).</title>
        <authorList>
            <consortium name="The MGC Project Team"/>
        </authorList>
    </citation>
    <scope>NUCLEOTIDE SEQUENCE [LARGE SCALE MRNA]</scope>
    <source>
        <tissue>Brain</tissue>
        <tissue>Skin</tissue>
    </source>
</reference>
<reference key="4">
    <citation type="journal article" date="2008" name="Cell">
        <title>Mechanism of ubiquitin-chain formation by the human anaphase-promoting complex.</title>
        <authorList>
            <person name="Jin L."/>
            <person name="Williamson A."/>
            <person name="Banerjee S."/>
            <person name="Philipp I."/>
            <person name="Rape M."/>
        </authorList>
    </citation>
    <scope>FUNCTION OF THE APC/C</scope>
</reference>
<reference key="5">
    <citation type="journal article" date="2008" name="Proc. Natl. Acad. Sci. U.S.A.">
        <title>A quantitative atlas of mitotic phosphorylation.</title>
        <authorList>
            <person name="Dephoure N."/>
            <person name="Zhou C."/>
            <person name="Villen J."/>
            <person name="Beausoleil S.A."/>
            <person name="Bakalarski C.E."/>
            <person name="Elledge S.J."/>
            <person name="Gygi S.P."/>
        </authorList>
    </citation>
    <scope>PHOSPHORYLATION [LARGE SCALE ANALYSIS] AT SER-42</scope>
    <scope>IDENTIFICATION BY MASS SPECTROMETRY [LARGE SCALE ANALYSIS]</scope>
    <source>
        <tissue>Cervix carcinoma</tissue>
    </source>
</reference>
<reference key="6">
    <citation type="journal article" date="2009" name="Anal. Chem.">
        <title>Lys-N and trypsin cover complementary parts of the phosphoproteome in a refined SCX-based approach.</title>
        <authorList>
            <person name="Gauci S."/>
            <person name="Helbig A.O."/>
            <person name="Slijper M."/>
            <person name="Krijgsveld J."/>
            <person name="Heck A.J."/>
            <person name="Mohammed S."/>
        </authorList>
    </citation>
    <scope>IDENTIFICATION BY MASS SPECTROMETRY [LARGE SCALE ANALYSIS]</scope>
</reference>
<reference key="7">
    <citation type="journal article" date="2010" name="Sci. Signal.">
        <title>Quantitative phosphoproteomics reveals widespread full phosphorylation site occupancy during mitosis.</title>
        <authorList>
            <person name="Olsen J.V."/>
            <person name="Vermeulen M."/>
            <person name="Santamaria A."/>
            <person name="Kumar C."/>
            <person name="Miller M.L."/>
            <person name="Jensen L.J."/>
            <person name="Gnad F."/>
            <person name="Cox J."/>
            <person name="Jensen T.S."/>
            <person name="Nigg E.A."/>
            <person name="Brunak S."/>
            <person name="Mann M."/>
        </authorList>
    </citation>
    <scope>PHOSPHORYLATION [LARGE SCALE ANALYSIS] AT SER-42 AND SER-82</scope>
    <scope>IDENTIFICATION BY MASS SPECTROMETRY [LARGE SCALE ANALYSIS]</scope>
    <source>
        <tissue>Cervix carcinoma</tissue>
    </source>
</reference>
<reference key="8">
    <citation type="journal article" date="2011" name="Sci. Signal.">
        <title>System-wide temporal characterization of the proteome and phosphoproteome of human embryonic stem cell differentiation.</title>
        <authorList>
            <person name="Rigbolt K.T."/>
            <person name="Prokhorova T.A."/>
            <person name="Akimov V."/>
            <person name="Henningsen J."/>
            <person name="Johansen P.T."/>
            <person name="Kratchmarova I."/>
            <person name="Kassem M."/>
            <person name="Mann M."/>
            <person name="Olsen J.V."/>
            <person name="Blagoev B."/>
        </authorList>
    </citation>
    <scope>PHOSPHORYLATION [LARGE SCALE ANALYSIS] AT SER-82</scope>
    <scope>IDENTIFICATION BY MASS SPECTROMETRY [LARGE SCALE ANALYSIS]</scope>
</reference>
<reference key="9">
    <citation type="journal article" date="2013" name="J. Proteome Res.">
        <title>Toward a comprehensive characterization of a human cancer cell phosphoproteome.</title>
        <authorList>
            <person name="Zhou H."/>
            <person name="Di Palma S."/>
            <person name="Preisinger C."/>
            <person name="Peng M."/>
            <person name="Polat A.N."/>
            <person name="Heck A.J."/>
            <person name="Mohammed S."/>
        </authorList>
    </citation>
    <scope>PHOSPHORYLATION [LARGE SCALE ANALYSIS] AT SER-42</scope>
    <scope>IDENTIFICATION BY MASS SPECTROMETRY [LARGE SCALE ANALYSIS]</scope>
    <source>
        <tissue>Cervix carcinoma</tissue>
        <tissue>Erythroleukemia</tissue>
    </source>
</reference>
<reference key="10">
    <citation type="journal article" date="2017" name="Cell">
        <title>Assembly and function of heterotypic ubiquitin chains in cell-cycle and protein quality control.</title>
        <authorList>
            <person name="Yau R.G."/>
            <person name="Doerner K."/>
            <person name="Castellanos E.R."/>
            <person name="Haakonsen D.L."/>
            <person name="Werner A."/>
            <person name="Wang N."/>
            <person name="Yang X.W."/>
            <person name="Martinez-Martin N."/>
            <person name="Matsumoto M.L."/>
            <person name="Dixit V.M."/>
            <person name="Rape M."/>
        </authorList>
    </citation>
    <scope>FUNCTION</scope>
    <scope>PATHWAY</scope>
</reference>
<reference key="11">
    <citation type="journal article" date="2022" name="Clin. Genet.">
        <title>A homozygous loss-of-function mutation in FBXO43 causes human non-obstructive azoospermia.</title>
        <authorList>
            <person name="Wu H."/>
            <person name="Zhang X."/>
            <person name="Shen Q."/>
            <person name="Liu Y."/>
            <person name="Gao Y."/>
            <person name="Wang G."/>
            <person name="Lv M."/>
            <person name="Hua R."/>
            <person name="Xu Y."/>
            <person name="Zhou P."/>
            <person name="Wei Z."/>
            <person name="Tao F."/>
            <person name="He X."/>
            <person name="Cao Y."/>
            <person name="Liu M."/>
        </authorList>
    </citation>
    <scope>INTERACTION WITH FBXO43</scope>
</reference>
<reference key="12">
    <citation type="journal article" date="2005" name="Mol. Cell">
        <title>Localization of the coactivator Cdh1 and the cullin subunit Apc2 in a cryo-electron microscopy model of vertebrate APC/C.</title>
        <authorList>
            <person name="Dube P."/>
            <person name="Herzog F."/>
            <person name="Gieffers C."/>
            <person name="Sander B."/>
            <person name="Riedel D."/>
            <person name="Mueller S.A."/>
            <person name="Engel A."/>
            <person name="Peters J.-M."/>
            <person name="Stark H."/>
        </authorList>
    </citation>
    <scope>STRUCTURE BY ELECTRON MICROSCOPY OF THE APC/C</scope>
</reference>
<reference key="13">
    <citation type="journal article" date="2009" name="Nat. Struct. Mol. Biol.">
        <title>Insights into anaphase promoting complex TPR subdomain assembly from a CDC26-APC6 structure.</title>
        <authorList>
            <person name="Wang J."/>
            <person name="Dye B.T."/>
            <person name="Rajashankar K.R."/>
            <person name="Kurinov I."/>
            <person name="Schulman B.A."/>
        </authorList>
    </citation>
    <scope>X-RAY CRYSTALLOGRAPHY (2.8 ANGSTROMS) OF 1-29 IN COMPLEX WITH CDC16</scope>
</reference>
<reference key="14">
    <citation type="journal article" date="2014" name="Nature">
        <title>Molecular architecture and mechanism of the anaphase-promoting complex.</title>
        <authorList>
            <person name="Chang L."/>
            <person name="Zhang Z."/>
            <person name="Yang J."/>
            <person name="McLaughlin S.H."/>
            <person name="Barford D."/>
        </authorList>
    </citation>
    <scope>STRUCTURE BY ELECTRON MICROSCOPY (7.4 ANGSTROMS) OF THE APC/C</scope>
    <scope>SUBUNIT</scope>
</reference>
<reference evidence="11 12" key="15">
    <citation type="journal article" date="2015" name="Nature">
        <title>Atomic structure of the APC/C and its mechanism of protein ubiquitination.</title>
        <authorList>
            <person name="Chang L."/>
            <person name="Zhang Z."/>
            <person name="Yang J."/>
            <person name="McLaughlin S.H."/>
            <person name="Barford D."/>
        </authorList>
    </citation>
    <scope>STRUCTURE BY ELECTRON MICROSCOPY (3.60 ANGSTROMS) OF APC/C</scope>
    <scope>SUBUNIT</scope>
</reference>
<dbReference type="EMBL" id="AF503918">
    <property type="protein sequence ID" value="AAM34207.1"/>
    <property type="molecule type" value="mRNA"/>
</dbReference>
<dbReference type="EMBL" id="AL449305">
    <property type="status" value="NOT_ANNOTATED_CDS"/>
    <property type="molecule type" value="Genomic_DNA"/>
</dbReference>
<dbReference type="EMBL" id="BC042534">
    <property type="protein sequence ID" value="AAH42534.1"/>
    <property type="molecule type" value="mRNA"/>
</dbReference>
<dbReference type="EMBL" id="BC066300">
    <property type="protein sequence ID" value="AAH66300.1"/>
    <property type="molecule type" value="mRNA"/>
</dbReference>
<dbReference type="CCDS" id="CCDS6790.1"/>
<dbReference type="RefSeq" id="NP_644815.1">
    <property type="nucleotide sequence ID" value="NM_139286.4"/>
</dbReference>
<dbReference type="RefSeq" id="XP_016870062.1">
    <property type="nucleotide sequence ID" value="XM_017014573.2"/>
</dbReference>
<dbReference type="RefSeq" id="XP_016870063.1">
    <property type="nucleotide sequence ID" value="XM_017014574.2"/>
</dbReference>
<dbReference type="RefSeq" id="XP_016870064.1">
    <property type="nucleotide sequence ID" value="XM_017014575.2"/>
</dbReference>
<dbReference type="RefSeq" id="XP_047279100.1">
    <property type="nucleotide sequence ID" value="XM_047423144.1"/>
</dbReference>
<dbReference type="RefSeq" id="XP_047279101.1">
    <property type="nucleotide sequence ID" value="XM_047423145.1"/>
</dbReference>
<dbReference type="RefSeq" id="XP_047279102.1">
    <property type="nucleotide sequence ID" value="XM_047423146.1"/>
</dbReference>
<dbReference type="RefSeq" id="XP_054218575.1">
    <property type="nucleotide sequence ID" value="XM_054362600.1"/>
</dbReference>
<dbReference type="RefSeq" id="XP_054218576.1">
    <property type="nucleotide sequence ID" value="XM_054362601.1"/>
</dbReference>
<dbReference type="RefSeq" id="XP_054218577.1">
    <property type="nucleotide sequence ID" value="XM_054362602.1"/>
</dbReference>
<dbReference type="PDB" id="3HYM">
    <property type="method" value="X-ray"/>
    <property type="resolution" value="2.80 A"/>
    <property type="chains" value="A/C/E/G/I/K=1-29"/>
</dbReference>
<dbReference type="PDB" id="4UI9">
    <property type="method" value="EM"/>
    <property type="resolution" value="3.60 A"/>
    <property type="chains" value="G/W=1-85"/>
</dbReference>
<dbReference type="PDB" id="5A31">
    <property type="method" value="EM"/>
    <property type="resolution" value="4.30 A"/>
    <property type="chains" value="G/W=1-85"/>
</dbReference>
<dbReference type="PDB" id="5G04">
    <property type="method" value="EM"/>
    <property type="resolution" value="4.00 A"/>
    <property type="chains" value="G/W=1-85"/>
</dbReference>
<dbReference type="PDB" id="5G05">
    <property type="method" value="EM"/>
    <property type="resolution" value="3.40 A"/>
    <property type="chains" value="G/W=1-85"/>
</dbReference>
<dbReference type="PDB" id="5KHR">
    <property type="method" value="EM"/>
    <property type="resolution" value="6.10 A"/>
    <property type="chains" value="G/W=1-85"/>
</dbReference>
<dbReference type="PDB" id="5KHU">
    <property type="method" value="EM"/>
    <property type="resolution" value="4.80 A"/>
    <property type="chains" value="G/W=1-85"/>
</dbReference>
<dbReference type="PDB" id="5L9T">
    <property type="method" value="EM"/>
    <property type="resolution" value="6.40 A"/>
    <property type="chains" value="G/W=1-85"/>
</dbReference>
<dbReference type="PDB" id="5L9U">
    <property type="method" value="EM"/>
    <property type="resolution" value="6.40 A"/>
    <property type="chains" value="G/W=1-85"/>
</dbReference>
<dbReference type="PDB" id="5LCW">
    <property type="method" value="EM"/>
    <property type="resolution" value="4.00 A"/>
    <property type="chains" value="G/W=1-85"/>
</dbReference>
<dbReference type="PDB" id="6Q6G">
    <property type="method" value="EM"/>
    <property type="resolution" value="3.20 A"/>
    <property type="chains" value="G/W=1-85"/>
</dbReference>
<dbReference type="PDB" id="6Q6H">
    <property type="method" value="EM"/>
    <property type="resolution" value="3.20 A"/>
    <property type="chains" value="G/W=1-85"/>
</dbReference>
<dbReference type="PDB" id="6TLJ">
    <property type="method" value="EM"/>
    <property type="resolution" value="3.80 A"/>
    <property type="chains" value="G/W=1-85"/>
</dbReference>
<dbReference type="PDB" id="6TM5">
    <property type="method" value="EM"/>
    <property type="resolution" value="3.90 A"/>
    <property type="chains" value="G/W=1-85"/>
</dbReference>
<dbReference type="PDB" id="6TNT">
    <property type="method" value="EM"/>
    <property type="resolution" value="3.78 A"/>
    <property type="chains" value="G/W=1-85"/>
</dbReference>
<dbReference type="PDB" id="8PKP">
    <property type="method" value="EM"/>
    <property type="resolution" value="3.20 A"/>
    <property type="chains" value="G/W=1-85"/>
</dbReference>
<dbReference type="PDB" id="8TAR">
    <property type="method" value="EM"/>
    <property type="resolution" value="4.00 A"/>
    <property type="chains" value="G/W=1-85"/>
</dbReference>
<dbReference type="PDB" id="8TAU">
    <property type="method" value="EM"/>
    <property type="resolution" value="3.50 A"/>
    <property type="chains" value="G/W=1-85"/>
</dbReference>
<dbReference type="PDB" id="9GAW">
    <property type="method" value="EM"/>
    <property type="resolution" value="2.90 A"/>
    <property type="chains" value="G/W=1-85"/>
</dbReference>
<dbReference type="PDBsum" id="3HYM"/>
<dbReference type="PDBsum" id="4UI9"/>
<dbReference type="PDBsum" id="5A31"/>
<dbReference type="PDBsum" id="5G04"/>
<dbReference type="PDBsum" id="5G05"/>
<dbReference type="PDBsum" id="5KHR"/>
<dbReference type="PDBsum" id="5KHU"/>
<dbReference type="PDBsum" id="5L9T"/>
<dbReference type="PDBsum" id="5L9U"/>
<dbReference type="PDBsum" id="5LCW"/>
<dbReference type="PDBsum" id="6Q6G"/>
<dbReference type="PDBsum" id="6Q6H"/>
<dbReference type="PDBsum" id="6TLJ"/>
<dbReference type="PDBsum" id="6TM5"/>
<dbReference type="PDBsum" id="6TNT"/>
<dbReference type="PDBsum" id="8PKP"/>
<dbReference type="PDBsum" id="8TAR"/>
<dbReference type="PDBsum" id="8TAU"/>
<dbReference type="PDBsum" id="9GAW"/>
<dbReference type="EMDB" id="EMD-10516"/>
<dbReference type="EMDB" id="EMD-10518"/>
<dbReference type="EMDB" id="EMD-10536"/>
<dbReference type="EMDB" id="EMD-13931"/>
<dbReference type="EMDB" id="EMD-17751"/>
<dbReference type="EMDB" id="EMD-19711"/>
<dbReference type="EMDB" id="EMD-2924"/>
<dbReference type="EMDB" id="EMD-2925"/>
<dbReference type="EMDB" id="EMD-3385"/>
<dbReference type="EMDB" id="EMD-3386"/>
<dbReference type="EMDB" id="EMD-3387"/>
<dbReference type="EMDB" id="EMD-3388"/>
<dbReference type="EMDB" id="EMD-3389"/>
<dbReference type="EMDB" id="EMD-3390"/>
<dbReference type="EMDB" id="EMD-4037"/>
<dbReference type="EMDB" id="EMD-41140"/>
<dbReference type="EMDB" id="EMD-41142"/>
<dbReference type="EMDB" id="EMD-4465"/>
<dbReference type="EMDB" id="EMD-4466"/>
<dbReference type="EMDB" id="EMD-4467"/>
<dbReference type="EMDB" id="EMD-51190"/>
<dbReference type="SMR" id="Q8NHZ8"/>
<dbReference type="BioGRID" id="128878">
    <property type="interactions" value="62"/>
</dbReference>
<dbReference type="ComplexPortal" id="CPX-1860">
    <property type="entry name" value="Anaphase-promoting core complex"/>
</dbReference>
<dbReference type="CORUM" id="Q8NHZ8"/>
<dbReference type="DIP" id="DIP-48551N"/>
<dbReference type="FunCoup" id="Q8NHZ8">
    <property type="interactions" value="1826"/>
</dbReference>
<dbReference type="IntAct" id="Q8NHZ8">
    <property type="interactions" value="55"/>
</dbReference>
<dbReference type="MINT" id="Q8NHZ8"/>
<dbReference type="STRING" id="9606.ENSP00000363322"/>
<dbReference type="iPTMnet" id="Q8NHZ8"/>
<dbReference type="PhosphoSitePlus" id="Q8NHZ8"/>
<dbReference type="BioMuta" id="CDC26"/>
<dbReference type="DMDM" id="74751322"/>
<dbReference type="jPOST" id="Q8NHZ8"/>
<dbReference type="MassIVE" id="Q8NHZ8"/>
<dbReference type="PaxDb" id="9606-ENSP00000363322"/>
<dbReference type="PeptideAtlas" id="Q8NHZ8"/>
<dbReference type="ProteomicsDB" id="73794"/>
<dbReference type="Pumba" id="Q8NHZ8"/>
<dbReference type="TopDownProteomics" id="Q8NHZ8"/>
<dbReference type="Antibodypedia" id="44232">
    <property type="antibodies" value="103 antibodies from 22 providers"/>
</dbReference>
<dbReference type="DNASU" id="246184"/>
<dbReference type="Ensembl" id="ENST00000374206.4">
    <property type="protein sequence ID" value="ENSP00000363322.3"/>
    <property type="gene ID" value="ENSG00000176386.9"/>
</dbReference>
<dbReference type="GeneID" id="246184"/>
<dbReference type="KEGG" id="hsa:246184"/>
<dbReference type="MANE-Select" id="ENST00000374206.4">
    <property type="protein sequence ID" value="ENSP00000363322.3"/>
    <property type="RefSeq nucleotide sequence ID" value="NM_139286.4"/>
    <property type="RefSeq protein sequence ID" value="NP_644815.1"/>
</dbReference>
<dbReference type="UCSC" id="uc004bgw.4">
    <property type="organism name" value="human"/>
</dbReference>
<dbReference type="AGR" id="HGNC:17839"/>
<dbReference type="CTD" id="246184"/>
<dbReference type="DisGeNET" id="246184"/>
<dbReference type="GeneCards" id="CDC26"/>
<dbReference type="HGNC" id="HGNC:17839">
    <property type="gene designation" value="CDC26"/>
</dbReference>
<dbReference type="HPA" id="ENSG00000176386">
    <property type="expression patterns" value="Low tissue specificity"/>
</dbReference>
<dbReference type="MIM" id="614533">
    <property type="type" value="gene"/>
</dbReference>
<dbReference type="neXtProt" id="NX_Q8NHZ8"/>
<dbReference type="OpenTargets" id="ENSG00000176386"/>
<dbReference type="PharmGKB" id="PA25974"/>
<dbReference type="VEuPathDB" id="HostDB:ENSG00000176386"/>
<dbReference type="eggNOG" id="ENOG502S5GK">
    <property type="taxonomic scope" value="Eukaryota"/>
</dbReference>
<dbReference type="GeneTree" id="ENSGT00390000008457"/>
<dbReference type="HOGENOM" id="CLU_190086_0_0_1"/>
<dbReference type="InParanoid" id="Q8NHZ8"/>
<dbReference type="OMA" id="NREQMIN"/>
<dbReference type="OrthoDB" id="2422341at2759"/>
<dbReference type="PAN-GO" id="Q8NHZ8">
    <property type="GO annotations" value="3 GO annotations based on evolutionary models"/>
</dbReference>
<dbReference type="PhylomeDB" id="Q8NHZ8"/>
<dbReference type="TreeFam" id="TF101057"/>
<dbReference type="PathwayCommons" id="Q8NHZ8"/>
<dbReference type="Reactome" id="R-HSA-141430">
    <property type="pathway name" value="Inactivation of APC/C via direct inhibition of the APC/C complex"/>
</dbReference>
<dbReference type="Reactome" id="R-HSA-174048">
    <property type="pathway name" value="APC/C:Cdc20 mediated degradation of Cyclin B"/>
</dbReference>
<dbReference type="Reactome" id="R-HSA-174084">
    <property type="pathway name" value="Autodegradation of Cdh1 by Cdh1:APC/C"/>
</dbReference>
<dbReference type="Reactome" id="R-HSA-174154">
    <property type="pathway name" value="APC/C:Cdc20 mediated degradation of Securin"/>
</dbReference>
<dbReference type="Reactome" id="R-HSA-174178">
    <property type="pathway name" value="APC/C:Cdh1 mediated degradation of Cdc20 and other APC/C:Cdh1 targeted proteins in late mitosis/early G1"/>
</dbReference>
<dbReference type="Reactome" id="R-HSA-174184">
    <property type="pathway name" value="Cdc20:Phospho-APC/C mediated degradation of Cyclin A"/>
</dbReference>
<dbReference type="Reactome" id="R-HSA-176407">
    <property type="pathway name" value="Conversion from APC/C:Cdc20 to APC/C:Cdh1 in late anaphase"/>
</dbReference>
<dbReference type="Reactome" id="R-HSA-176408">
    <property type="pathway name" value="Regulation of APC/C activators between G1/S and early anaphase"/>
</dbReference>
<dbReference type="Reactome" id="R-HSA-176409">
    <property type="pathway name" value="APC/C:Cdc20 mediated degradation of mitotic proteins"/>
</dbReference>
<dbReference type="Reactome" id="R-HSA-176412">
    <property type="pathway name" value="Phosphorylation of the APC/C"/>
</dbReference>
<dbReference type="Reactome" id="R-HSA-179409">
    <property type="pathway name" value="APC-Cdc20 mediated degradation of Nek2A"/>
</dbReference>
<dbReference type="Reactome" id="R-HSA-2467813">
    <property type="pathway name" value="Separation of Sister Chromatids"/>
</dbReference>
<dbReference type="Reactome" id="R-HSA-2559582">
    <property type="pathway name" value="Senescence-Associated Secretory Phenotype (SASP)"/>
</dbReference>
<dbReference type="Reactome" id="R-HSA-68867">
    <property type="pathway name" value="Assembly of the pre-replicative complex"/>
</dbReference>
<dbReference type="Reactome" id="R-HSA-69017">
    <property type="pathway name" value="CDK-mediated phosphorylation and removal of Cdc6"/>
</dbReference>
<dbReference type="Reactome" id="R-HSA-8853884">
    <property type="pathway name" value="Transcriptional Regulation by VENTX"/>
</dbReference>
<dbReference type="Reactome" id="R-HSA-9687136">
    <property type="pathway name" value="Aberrant regulation of mitotic exit in cancer due to RB1 defects"/>
</dbReference>
<dbReference type="Reactome" id="R-HSA-983168">
    <property type="pathway name" value="Antigen processing: Ubiquitination &amp; Proteasome degradation"/>
</dbReference>
<dbReference type="SignaLink" id="Q8NHZ8"/>
<dbReference type="SIGNOR" id="Q8NHZ8"/>
<dbReference type="UniPathway" id="UPA00143"/>
<dbReference type="BioGRID-ORCS" id="246184">
    <property type="hits" value="491 hits in 1123 CRISPR screens"/>
</dbReference>
<dbReference type="ChiTaRS" id="CDC26">
    <property type="organism name" value="human"/>
</dbReference>
<dbReference type="EvolutionaryTrace" id="Q8NHZ8"/>
<dbReference type="GenomeRNAi" id="246184"/>
<dbReference type="Pharos" id="Q8NHZ8">
    <property type="development level" value="Tbio"/>
</dbReference>
<dbReference type="PRO" id="PR:Q8NHZ8"/>
<dbReference type="Proteomes" id="UP000005640">
    <property type="component" value="Chromosome 9"/>
</dbReference>
<dbReference type="RNAct" id="Q8NHZ8">
    <property type="molecule type" value="protein"/>
</dbReference>
<dbReference type="Bgee" id="ENSG00000176386">
    <property type="expression patterns" value="Expressed in calcaneal tendon and 104 other cell types or tissues"/>
</dbReference>
<dbReference type="ExpressionAtlas" id="Q8NHZ8">
    <property type="expression patterns" value="baseline and differential"/>
</dbReference>
<dbReference type="GO" id="GO:0005680">
    <property type="term" value="C:anaphase-promoting complex"/>
    <property type="evidence" value="ECO:0000314"/>
    <property type="project" value="UniProtKB"/>
</dbReference>
<dbReference type="GO" id="GO:0005829">
    <property type="term" value="C:cytosol"/>
    <property type="evidence" value="ECO:0000304"/>
    <property type="project" value="Reactome"/>
</dbReference>
<dbReference type="GO" id="GO:0005654">
    <property type="term" value="C:nucleoplasm"/>
    <property type="evidence" value="ECO:0000304"/>
    <property type="project" value="Reactome"/>
</dbReference>
<dbReference type="GO" id="GO:0031145">
    <property type="term" value="P:anaphase-promoting complex-dependent catabolic process"/>
    <property type="evidence" value="ECO:0000314"/>
    <property type="project" value="UniProtKB"/>
</dbReference>
<dbReference type="GO" id="GO:0051301">
    <property type="term" value="P:cell division"/>
    <property type="evidence" value="ECO:0007669"/>
    <property type="project" value="UniProtKB-KW"/>
</dbReference>
<dbReference type="GO" id="GO:0141198">
    <property type="term" value="P:protein branched polyubiquitination"/>
    <property type="evidence" value="ECO:0000314"/>
    <property type="project" value="UniProtKB"/>
</dbReference>
<dbReference type="GO" id="GO:0070979">
    <property type="term" value="P:protein K11-linked ubiquitination"/>
    <property type="evidence" value="ECO:0000314"/>
    <property type="project" value="UniProtKB"/>
</dbReference>
<dbReference type="GO" id="GO:0070936">
    <property type="term" value="P:protein K48-linked ubiquitination"/>
    <property type="evidence" value="ECO:0000314"/>
    <property type="project" value="UniProtKB"/>
</dbReference>
<dbReference type="GO" id="GO:0051445">
    <property type="term" value="P:regulation of meiotic cell cycle"/>
    <property type="evidence" value="ECO:0000303"/>
    <property type="project" value="ComplexPortal"/>
</dbReference>
<dbReference type="GO" id="GO:0007346">
    <property type="term" value="P:regulation of mitotic cell cycle"/>
    <property type="evidence" value="ECO:0000318"/>
    <property type="project" value="GO_Central"/>
</dbReference>
<dbReference type="DisProt" id="DP01453"/>
<dbReference type="InterPro" id="IPR018860">
    <property type="entry name" value="APC_suCDC26"/>
</dbReference>
<dbReference type="PANTHER" id="PTHR28579">
    <property type="entry name" value="ANAPHASE-PROMOTING COMPLEX SUBUNIT CDC26"/>
    <property type="match status" value="1"/>
</dbReference>
<dbReference type="PANTHER" id="PTHR28579:SF1">
    <property type="entry name" value="ANAPHASE-PROMOTING COMPLEX SUBUNIT CDC26"/>
    <property type="match status" value="1"/>
</dbReference>
<dbReference type="Pfam" id="PF10471">
    <property type="entry name" value="ANAPC_CDC26"/>
    <property type="match status" value="1"/>
</dbReference>
<evidence type="ECO:0000255" key="1"/>
<evidence type="ECO:0000256" key="2">
    <source>
        <dbReference type="SAM" id="MobiDB-lite"/>
    </source>
</evidence>
<evidence type="ECO:0000269" key="3">
    <source>
    </source>
</evidence>
<evidence type="ECO:0000269" key="4">
    <source>
    </source>
</evidence>
<evidence type="ECO:0000269" key="5">
    <source>
    </source>
</evidence>
<evidence type="ECO:0000269" key="6">
    <source>
    </source>
</evidence>
<evidence type="ECO:0000269" key="7">
    <source>
    </source>
</evidence>
<evidence type="ECO:0000269" key="8">
    <source>
    </source>
</evidence>
<evidence type="ECO:0000269" key="9">
    <source>
    </source>
</evidence>
<evidence type="ECO:0000305" key="10"/>
<evidence type="ECO:0007744" key="11">
    <source>
        <dbReference type="PDB" id="4UI9"/>
    </source>
</evidence>
<evidence type="ECO:0007744" key="12">
    <source>
        <dbReference type="PDB" id="5A31"/>
    </source>
</evidence>
<evidence type="ECO:0007744" key="13">
    <source>
    </source>
</evidence>
<evidence type="ECO:0007744" key="14">
    <source>
    </source>
</evidence>
<evidence type="ECO:0007744" key="15">
    <source>
    </source>
</evidence>
<evidence type="ECO:0007744" key="16">
    <source>
    </source>
</evidence>
<evidence type="ECO:0007829" key="17">
    <source>
        <dbReference type="PDB" id="3HYM"/>
    </source>
</evidence>
<gene>
    <name type="primary">CDC26</name>
    <name type="synonym">ANAPC12</name>
    <name type="synonym">C9orf17</name>
</gene>
<organism>
    <name type="scientific">Homo sapiens</name>
    <name type="common">Human</name>
    <dbReference type="NCBI Taxonomy" id="9606"/>
    <lineage>
        <taxon>Eukaryota</taxon>
        <taxon>Metazoa</taxon>
        <taxon>Chordata</taxon>
        <taxon>Craniata</taxon>
        <taxon>Vertebrata</taxon>
        <taxon>Euteleostomi</taxon>
        <taxon>Mammalia</taxon>
        <taxon>Eutheria</taxon>
        <taxon>Euarchontoglires</taxon>
        <taxon>Primates</taxon>
        <taxon>Haplorrhini</taxon>
        <taxon>Catarrhini</taxon>
        <taxon>Hominidae</taxon>
        <taxon>Homo</taxon>
    </lineage>
</organism>
<proteinExistence type="evidence at protein level"/>
<keyword id="KW-0002">3D-structure</keyword>
<keyword id="KW-0131">Cell cycle</keyword>
<keyword id="KW-0132">Cell division</keyword>
<keyword id="KW-0175">Coiled coil</keyword>
<keyword id="KW-0498">Mitosis</keyword>
<keyword id="KW-0539">Nucleus</keyword>
<keyword id="KW-0597">Phosphoprotein</keyword>
<keyword id="KW-1267">Proteomics identification</keyword>
<keyword id="KW-1185">Reference proteome</keyword>
<keyword id="KW-0833">Ubl conjugation pathway</keyword>
<accession>Q8NHZ8</accession>
<feature type="chain" id="PRO_0000271194" description="Anaphase-promoting complex subunit CDC26">
    <location>
        <begin position="1"/>
        <end position="85"/>
    </location>
</feature>
<feature type="region of interest" description="Disordered" evidence="2">
    <location>
        <begin position="30"/>
        <end position="85"/>
    </location>
</feature>
<feature type="coiled-coil region" evidence="1">
    <location>
        <begin position="7"/>
        <end position="38"/>
    </location>
</feature>
<feature type="compositionally biased region" description="Polar residues" evidence="2">
    <location>
        <begin position="73"/>
        <end position="85"/>
    </location>
</feature>
<feature type="modified residue" description="Phosphoserine" evidence="13 14 16">
    <location>
        <position position="42"/>
    </location>
</feature>
<feature type="modified residue" description="Phosphoserine" evidence="14 15">
    <location>
        <position position="82"/>
    </location>
</feature>
<feature type="helix" evidence="17">
    <location>
        <begin position="14"/>
        <end position="16"/>
    </location>
</feature>
<feature type="helix" evidence="17">
    <location>
        <begin position="17"/>
        <end position="25"/>
    </location>
</feature>
<sequence length="85" mass="9777">MLRRKPTRLELKLDDIEEFENIRKDLETRKKQKEDVEVVGGSDGEGAIGLSSDPKSREQMINDRIGYKPQPKPNNRSSQFGSLEF</sequence>
<comment type="function">
    <text evidence="4 8">Component of the anaphase promoting complex/cyclosome (APC/C), a cell cycle-regulated E3 ubiquitin ligase that controls progression through mitosis and the G1 phase of the cell cycle (PubMed:18485873). The APC/C complex acts by mediating ubiquitination and subsequent degradation of target proteins: it mainly mediates the formation of 'Lys-11'-linked polyubiquitin chains and, to a lower extent, the formation of 'Lys-48'- and 'Lys-63'-linked polyubiquitin chains (PubMed:18485873). The APC/C complex catalyzes assembly of branched 'Lys-11'-/'Lys-48'-linked branched ubiquitin chains on target proteins (PubMed:29033132). May recruit the E2 ubiquitin-conjugating enzymes to the complex (PubMed:18485873).</text>
</comment>
<comment type="pathway">
    <text evidence="4 8">Protein modification; protein ubiquitination.</text>
</comment>
<comment type="subunit">
    <text evidence="3 5 6 7 9">V-shaped homodimer. Interacts with CDC16. The mammalian APC/C is composed at least of 14 distinct subunits ANAPC1, ANAPC2, CDC27/APC3, ANAPC4, ANAPC5, CDC16/APC6, ANAPC7, CDC23/APC8, ANAPC10, ANAPC11, CDC26/APC12, ANAPC13, ANAPC15 and ANAPC16 that assemble into a complex of at least 19 chains with a combined molecular mass of around 1.2 MDa; APC/C interacts with FZR1 and FBXO5. Interacts with FBXO43.</text>
</comment>
<comment type="interaction">
    <interactant intactId="EBI-2555941">
        <id>Q8NHZ8</id>
    </interactant>
    <interactant intactId="EBI-930964">
        <id>P54253</id>
        <label>ATXN1</label>
    </interactant>
    <organismsDiffer>false</organismsDiffer>
    <experiments>3</experiments>
</comment>
<comment type="interaction">
    <interactant intactId="EBI-2555941">
        <id>Q8NHZ8</id>
    </interactant>
    <interactant intactId="EBI-994830">
        <id>Q13042</id>
        <label>CDC16</label>
    </interactant>
    <organismsDiffer>false</organismsDiffer>
    <experiments>19</experiments>
</comment>
<comment type="interaction">
    <interactant intactId="EBI-2555941">
        <id>Q8NHZ8</id>
    </interactant>
    <interactant intactId="EBI-15798699">
        <id>Q13042-1</id>
        <label>CDC16</label>
    </interactant>
    <organismsDiffer>false</organismsDiffer>
    <experiments>5</experiments>
</comment>
<comment type="subcellular location">
    <subcellularLocation>
        <location evidence="10">Nucleus</location>
    </subcellularLocation>
</comment>
<comment type="similarity">
    <text evidence="10">Belongs to the CDC26 family.</text>
</comment>